<reference key="1">
    <citation type="journal article" date="2007" name="Proc. Natl. Acad. Sci. U.S.A.">
        <title>Deep-sea vent epsilon-proteobacterial genomes provide insights into emergence of pathogens.</title>
        <authorList>
            <person name="Nakagawa S."/>
            <person name="Takaki Y."/>
            <person name="Shimamura S."/>
            <person name="Reysenbach A.-L."/>
            <person name="Takai K."/>
            <person name="Horikoshi K."/>
        </authorList>
    </citation>
    <scope>NUCLEOTIDE SEQUENCE [LARGE SCALE GENOMIC DNA]</scope>
    <source>
        <strain>NBC37-1</strain>
    </source>
</reference>
<gene>
    <name evidence="1" type="primary">rpsG</name>
    <name type="ordered locus">SUN_0134</name>
</gene>
<keyword id="KW-0687">Ribonucleoprotein</keyword>
<keyword id="KW-0689">Ribosomal protein</keyword>
<keyword id="KW-0694">RNA-binding</keyword>
<keyword id="KW-0699">rRNA-binding</keyword>
<keyword id="KW-0820">tRNA-binding</keyword>
<feature type="chain" id="PRO_1000014308" description="Small ribosomal subunit protein uS7">
    <location>
        <begin position="1"/>
        <end position="155"/>
    </location>
</feature>
<name>RS7_SULNB</name>
<accession>A6Q6I5</accession>
<proteinExistence type="inferred from homology"/>
<protein>
    <recommendedName>
        <fullName evidence="1">Small ribosomal subunit protein uS7</fullName>
    </recommendedName>
    <alternativeName>
        <fullName evidence="2">30S ribosomal protein S7</fullName>
    </alternativeName>
</protein>
<comment type="function">
    <text evidence="1">One of the primary rRNA binding proteins, it binds directly to 16S rRNA where it nucleates assembly of the head domain of the 30S subunit. Is located at the subunit interface close to the decoding center, probably blocks exit of the E-site tRNA.</text>
</comment>
<comment type="subunit">
    <text evidence="1">Part of the 30S ribosomal subunit. Contacts proteins S9 and S11.</text>
</comment>
<comment type="similarity">
    <text evidence="1">Belongs to the universal ribosomal protein uS7 family.</text>
</comment>
<sequence length="155" mass="17765">MRRRKAPVRPVLPDPVYGSKVLTKFINAVMLDGKKSTAQKVMYSALERIESKTGEKGIEVFNKAMDNIKPVMEVKSRRVGGATYQVPIEVRPARQQSLGIRWIVEAARKRNERTMMERLSNELMDAATEKGSAFKKKEDTYKMAEANKAFAHYRW</sequence>
<evidence type="ECO:0000255" key="1">
    <source>
        <dbReference type="HAMAP-Rule" id="MF_00480"/>
    </source>
</evidence>
<evidence type="ECO:0000305" key="2"/>
<organism>
    <name type="scientific">Sulfurovum sp. (strain NBC37-1)</name>
    <dbReference type="NCBI Taxonomy" id="387093"/>
    <lineage>
        <taxon>Bacteria</taxon>
        <taxon>Pseudomonadati</taxon>
        <taxon>Campylobacterota</taxon>
        <taxon>Epsilonproteobacteria</taxon>
        <taxon>Campylobacterales</taxon>
        <taxon>Sulfurovaceae</taxon>
        <taxon>Sulfurovum</taxon>
    </lineage>
</organism>
<dbReference type="EMBL" id="AP009179">
    <property type="protein sequence ID" value="BAF71094.1"/>
    <property type="molecule type" value="Genomic_DNA"/>
</dbReference>
<dbReference type="RefSeq" id="WP_011979827.1">
    <property type="nucleotide sequence ID" value="NC_009663.1"/>
</dbReference>
<dbReference type="SMR" id="A6Q6I5"/>
<dbReference type="STRING" id="387093.SUN_0134"/>
<dbReference type="KEGG" id="sun:SUN_0134"/>
<dbReference type="eggNOG" id="COG0049">
    <property type="taxonomic scope" value="Bacteria"/>
</dbReference>
<dbReference type="HOGENOM" id="CLU_072226_1_1_7"/>
<dbReference type="OrthoDB" id="9807653at2"/>
<dbReference type="Proteomes" id="UP000006378">
    <property type="component" value="Chromosome"/>
</dbReference>
<dbReference type="GO" id="GO:0015935">
    <property type="term" value="C:small ribosomal subunit"/>
    <property type="evidence" value="ECO:0007669"/>
    <property type="project" value="InterPro"/>
</dbReference>
<dbReference type="GO" id="GO:0019843">
    <property type="term" value="F:rRNA binding"/>
    <property type="evidence" value="ECO:0007669"/>
    <property type="project" value="UniProtKB-UniRule"/>
</dbReference>
<dbReference type="GO" id="GO:0003735">
    <property type="term" value="F:structural constituent of ribosome"/>
    <property type="evidence" value="ECO:0007669"/>
    <property type="project" value="InterPro"/>
</dbReference>
<dbReference type="GO" id="GO:0000049">
    <property type="term" value="F:tRNA binding"/>
    <property type="evidence" value="ECO:0007669"/>
    <property type="project" value="UniProtKB-UniRule"/>
</dbReference>
<dbReference type="GO" id="GO:0006412">
    <property type="term" value="P:translation"/>
    <property type="evidence" value="ECO:0007669"/>
    <property type="project" value="UniProtKB-UniRule"/>
</dbReference>
<dbReference type="CDD" id="cd14869">
    <property type="entry name" value="uS7_Bacteria"/>
    <property type="match status" value="1"/>
</dbReference>
<dbReference type="FunFam" id="1.10.455.10:FF:000001">
    <property type="entry name" value="30S ribosomal protein S7"/>
    <property type="match status" value="1"/>
</dbReference>
<dbReference type="Gene3D" id="1.10.455.10">
    <property type="entry name" value="Ribosomal protein S7 domain"/>
    <property type="match status" value="1"/>
</dbReference>
<dbReference type="HAMAP" id="MF_00480_B">
    <property type="entry name" value="Ribosomal_uS7_B"/>
    <property type="match status" value="1"/>
</dbReference>
<dbReference type="InterPro" id="IPR000235">
    <property type="entry name" value="Ribosomal_uS7"/>
</dbReference>
<dbReference type="InterPro" id="IPR005717">
    <property type="entry name" value="Ribosomal_uS7_bac/org-type"/>
</dbReference>
<dbReference type="InterPro" id="IPR020606">
    <property type="entry name" value="Ribosomal_uS7_CS"/>
</dbReference>
<dbReference type="InterPro" id="IPR023798">
    <property type="entry name" value="Ribosomal_uS7_dom"/>
</dbReference>
<dbReference type="InterPro" id="IPR036823">
    <property type="entry name" value="Ribosomal_uS7_dom_sf"/>
</dbReference>
<dbReference type="NCBIfam" id="TIGR01029">
    <property type="entry name" value="rpsG_bact"/>
    <property type="match status" value="1"/>
</dbReference>
<dbReference type="PANTHER" id="PTHR11205">
    <property type="entry name" value="RIBOSOMAL PROTEIN S7"/>
    <property type="match status" value="1"/>
</dbReference>
<dbReference type="Pfam" id="PF00177">
    <property type="entry name" value="Ribosomal_S7"/>
    <property type="match status" value="1"/>
</dbReference>
<dbReference type="PIRSF" id="PIRSF002122">
    <property type="entry name" value="RPS7p_RPS7a_RPS5e_RPS7o"/>
    <property type="match status" value="1"/>
</dbReference>
<dbReference type="SUPFAM" id="SSF47973">
    <property type="entry name" value="Ribosomal protein S7"/>
    <property type="match status" value="1"/>
</dbReference>
<dbReference type="PROSITE" id="PS00052">
    <property type="entry name" value="RIBOSOMAL_S7"/>
    <property type="match status" value="1"/>
</dbReference>